<protein>
    <recommendedName>
        <fullName>Nuclear receptor-binding factor 2</fullName>
        <shortName>NRBF-2</shortName>
    </recommendedName>
</protein>
<accession>Q5R4C9</accession>
<dbReference type="EMBL" id="CR861322">
    <property type="protein sequence ID" value="CAH93387.1"/>
    <property type="molecule type" value="mRNA"/>
</dbReference>
<dbReference type="RefSeq" id="NP_001126988.1">
    <property type="nucleotide sequence ID" value="NM_001133516.1"/>
</dbReference>
<dbReference type="SMR" id="Q5R4C9"/>
<dbReference type="FunCoup" id="Q5R4C9">
    <property type="interactions" value="3042"/>
</dbReference>
<dbReference type="STRING" id="9601.ENSPPYP00000002795"/>
<dbReference type="Ensembl" id="ENSPPYT00000002893.3">
    <property type="protein sequence ID" value="ENSPPYP00000002795.2"/>
    <property type="gene ID" value="ENSPPYG00000002411.3"/>
</dbReference>
<dbReference type="GeneID" id="100174011"/>
<dbReference type="KEGG" id="pon:100174011"/>
<dbReference type="CTD" id="29982"/>
<dbReference type="eggNOG" id="ENOG502QRE0">
    <property type="taxonomic scope" value="Eukaryota"/>
</dbReference>
<dbReference type="GeneTree" id="ENSGT00390000000984"/>
<dbReference type="HOGENOM" id="CLU_098323_0_0_1"/>
<dbReference type="InParanoid" id="Q5R4C9"/>
<dbReference type="OMA" id="KCHETVA"/>
<dbReference type="OrthoDB" id="3694230at2759"/>
<dbReference type="TreeFam" id="TF328627"/>
<dbReference type="Proteomes" id="UP000001595">
    <property type="component" value="Chromosome 10"/>
</dbReference>
<dbReference type="GO" id="GO:0005776">
    <property type="term" value="C:autophagosome"/>
    <property type="evidence" value="ECO:0007669"/>
    <property type="project" value="UniProtKB-SubCell"/>
</dbReference>
<dbReference type="GO" id="GO:0031410">
    <property type="term" value="C:cytoplasmic vesicle"/>
    <property type="evidence" value="ECO:0007669"/>
    <property type="project" value="UniProtKB-KW"/>
</dbReference>
<dbReference type="GO" id="GO:0005634">
    <property type="term" value="C:nucleus"/>
    <property type="evidence" value="ECO:0007669"/>
    <property type="project" value="UniProtKB-SubCell"/>
</dbReference>
<dbReference type="GO" id="GO:0035032">
    <property type="term" value="C:phosphatidylinositol 3-kinase complex, class III"/>
    <property type="evidence" value="ECO:0007669"/>
    <property type="project" value="Ensembl"/>
</dbReference>
<dbReference type="GO" id="GO:0006914">
    <property type="term" value="P:autophagy"/>
    <property type="evidence" value="ECO:0007669"/>
    <property type="project" value="Ensembl"/>
</dbReference>
<dbReference type="GO" id="GO:0034976">
    <property type="term" value="P:response to endoplasmic reticulum stress"/>
    <property type="evidence" value="ECO:0007669"/>
    <property type="project" value="Ensembl"/>
</dbReference>
<dbReference type="FunFam" id="1.20.58.80:FF:000018">
    <property type="entry name" value="nuclear receptor-binding factor 2 isoform X1"/>
    <property type="match status" value="1"/>
</dbReference>
<dbReference type="Gene3D" id="1.20.58.80">
    <property type="entry name" value="Phosphotransferase system, lactose/cellobiose-type IIA subunit"/>
    <property type="match status" value="1"/>
</dbReference>
<dbReference type="InterPro" id="IPR039679">
    <property type="entry name" value="NRBF2"/>
</dbReference>
<dbReference type="InterPro" id="IPR015056">
    <property type="entry name" value="NRBF2_C"/>
</dbReference>
<dbReference type="InterPro" id="IPR033393">
    <property type="entry name" value="NRBF2_MIT"/>
</dbReference>
<dbReference type="PANTHER" id="PTHR14964">
    <property type="entry name" value="NUCLEAR RECEPTOR BINDING FACTOR 2"/>
    <property type="match status" value="1"/>
</dbReference>
<dbReference type="PANTHER" id="PTHR14964:SF2">
    <property type="entry name" value="NUCLEAR RECEPTOR-BINDING FACTOR 2"/>
    <property type="match status" value="1"/>
</dbReference>
<dbReference type="Pfam" id="PF08961">
    <property type="entry name" value="NRBF2"/>
    <property type="match status" value="1"/>
</dbReference>
<dbReference type="Pfam" id="PF17169">
    <property type="entry name" value="NRBF2_MIT"/>
    <property type="match status" value="1"/>
</dbReference>
<dbReference type="SUPFAM" id="SSF140361">
    <property type="entry name" value="MIT domain-like"/>
    <property type="match status" value="1"/>
</dbReference>
<reference key="1">
    <citation type="submission" date="2004-11" db="EMBL/GenBank/DDBJ databases">
        <authorList>
            <consortium name="The German cDNA consortium"/>
        </authorList>
    </citation>
    <scope>NUCLEOTIDE SEQUENCE [LARGE SCALE MRNA]</scope>
    <source>
        <tissue>Brain cortex</tissue>
    </source>
</reference>
<feature type="chain" id="PRO_0000235818" description="Nuclear receptor-binding factor 2">
    <location>
        <begin position="1"/>
        <end position="287"/>
    </location>
</feature>
<feature type="region of interest" description="Disordered" evidence="6">
    <location>
        <begin position="99"/>
        <end position="122"/>
    </location>
</feature>
<feature type="coiled-coil region" evidence="5">
    <location>
        <begin position="168"/>
        <end position="209"/>
    </location>
</feature>
<feature type="short sequence motif" description="Nuclear receptor interaction motif" evidence="1">
    <location>
        <begin position="141"/>
        <end position="145"/>
    </location>
</feature>
<feature type="compositionally biased region" description="Polar residues" evidence="6">
    <location>
        <begin position="113"/>
        <end position="122"/>
    </location>
</feature>
<feature type="modified residue" description="Phosphoserine" evidence="3">
    <location>
        <position position="113"/>
    </location>
</feature>
<feature type="modified residue" description="Phosphoserine" evidence="3">
    <location>
        <position position="268"/>
    </location>
</feature>
<comment type="function">
    <text evidence="1">May modulate transcriptional activation by target nuclear receptors. Can act as transcriptional activator (in vitro) (By similarity).</text>
</comment>
<comment type="function">
    <text evidence="2 3">Involved in starvation-induced autophagy probably by its association with PI3K complex I (PI3KC3-C1). However, effects has been described variably. Involved in the induction of starvation-induced autophagy. Stabilizes PI3KC3-C1 assembly and enhances ATG14-linked lipid kinase activity of PIK3C3. Proposed to negatively regulate basal and starvation-induced autophagy and to inhibit PIK3C3 activity by modulating interactions in PI3KC3-C1. May be involved in autophagosome biogenesis. May play a role in neural progenitor cell survival during differentiation (By similarity).</text>
</comment>
<comment type="subunit">
    <text evidence="2 3">Interacts with PPARD and PPARG (By similarity). Interacts with SCOC (By similarity). Interacts with PPARA. Interacts with THRB, RARA, RARG and RXRA in the presence of bound ligand. Associates with the PI3K complex I (PI3KC3-C1); the direct binding partner in the complex is reported variably as PIK3R4 or ATG14 (By similarity).</text>
</comment>
<comment type="subcellular location">
    <subcellularLocation>
        <location evidence="4">Nucleus</location>
    </subcellularLocation>
    <subcellularLocation>
        <location evidence="4">Cytoplasm</location>
    </subcellularLocation>
    <subcellularLocation>
        <location evidence="7">Cytoplasmic vesicle</location>
        <location evidence="7">Autophagosome</location>
    </subcellularLocation>
</comment>
<comment type="similarity">
    <text evidence="7">Belongs to the NRBF family.</text>
</comment>
<gene>
    <name type="primary">NRBF2</name>
</gene>
<evidence type="ECO:0000250" key="1"/>
<evidence type="ECO:0000250" key="2">
    <source>
        <dbReference type="UniProtKB" id="Q8VCQ3"/>
    </source>
</evidence>
<evidence type="ECO:0000250" key="3">
    <source>
        <dbReference type="UniProtKB" id="Q96F24"/>
    </source>
</evidence>
<evidence type="ECO:0000250" key="4">
    <source>
        <dbReference type="UniProtKB" id="Q9QYK3"/>
    </source>
</evidence>
<evidence type="ECO:0000255" key="5"/>
<evidence type="ECO:0000256" key="6">
    <source>
        <dbReference type="SAM" id="MobiDB-lite"/>
    </source>
</evidence>
<evidence type="ECO:0000305" key="7"/>
<sequence>MEVMEGPLNLAHQQSRRADRLLAAGKYEEAISCHKKAAAYLSEAMKLTQSEQAHLSLELQRDSHMKQLLLIQERWKRAQREERLKAQQNTDKDVAAHLQTSHKPSAEDAEGQSPLSQKYSPSTEKCLPEIQGIFDRDPDTLLYLLQQKSEPAEPCIGSKAPKDDKTIIEEQATKIADLKRHVEFLVAENERLRKENKQLKAEKARLLKGPIEKELDVDADFVETSELWSLPPHSETATASSTWQKFAANTGKAKDIPIPNLPPLDFPSPELPLMELSEDILKGFMNN</sequence>
<name>NRBF2_PONAB</name>
<organism>
    <name type="scientific">Pongo abelii</name>
    <name type="common">Sumatran orangutan</name>
    <name type="synonym">Pongo pygmaeus abelii</name>
    <dbReference type="NCBI Taxonomy" id="9601"/>
    <lineage>
        <taxon>Eukaryota</taxon>
        <taxon>Metazoa</taxon>
        <taxon>Chordata</taxon>
        <taxon>Craniata</taxon>
        <taxon>Vertebrata</taxon>
        <taxon>Euteleostomi</taxon>
        <taxon>Mammalia</taxon>
        <taxon>Eutheria</taxon>
        <taxon>Euarchontoglires</taxon>
        <taxon>Primates</taxon>
        <taxon>Haplorrhini</taxon>
        <taxon>Catarrhini</taxon>
        <taxon>Hominidae</taxon>
        <taxon>Pongo</taxon>
    </lineage>
</organism>
<proteinExistence type="evidence at transcript level"/>
<keyword id="KW-0175">Coiled coil</keyword>
<keyword id="KW-0963">Cytoplasm</keyword>
<keyword id="KW-0968">Cytoplasmic vesicle</keyword>
<keyword id="KW-0539">Nucleus</keyword>
<keyword id="KW-0597">Phosphoprotein</keyword>
<keyword id="KW-1185">Reference proteome</keyword>
<keyword id="KW-0804">Transcription</keyword>
<keyword id="KW-0805">Transcription regulation</keyword>